<proteinExistence type="inferred from homology"/>
<dbReference type="EMBL" id="BA000041">
    <property type="protein sequence ID" value="BAC78175.1"/>
    <property type="molecule type" value="Genomic_DNA"/>
</dbReference>
<dbReference type="EMBL" id="AB210211">
    <property type="protein sequence ID" value="BAE92833.1"/>
    <property type="molecule type" value="Genomic_DNA"/>
</dbReference>
<dbReference type="EMBL" id="AB210212">
    <property type="protein sequence ID" value="BAE92834.1"/>
    <property type="molecule type" value="Genomic_DNA"/>
</dbReference>
<dbReference type="RefSeq" id="NP_001038974.1">
    <property type="nucleotide sequence ID" value="NM_001045509.1"/>
</dbReference>
<dbReference type="SMR" id="Q7JJU6"/>
<dbReference type="FunCoup" id="Q7JJU6">
    <property type="interactions" value="2219"/>
</dbReference>
<dbReference type="STRING" id="9598.ENSPTRP00000003471"/>
<dbReference type="PaxDb" id="9598-ENSPTRP00000030606"/>
<dbReference type="Ensembl" id="ENSPTRT00000003762.5">
    <property type="protein sequence ID" value="ENSPTRP00000003471.5"/>
    <property type="gene ID" value="ENSPTRG00000017675.6"/>
</dbReference>
<dbReference type="GeneID" id="471960"/>
<dbReference type="KEGG" id="ptr:471960"/>
<dbReference type="CTD" id="203068"/>
<dbReference type="VGNC" id="VGNC:12734">
    <property type="gene designation" value="TUBB"/>
</dbReference>
<dbReference type="eggNOG" id="KOG1375">
    <property type="taxonomic scope" value="Eukaryota"/>
</dbReference>
<dbReference type="GeneTree" id="ENSGT00940000154370"/>
<dbReference type="HOGENOM" id="CLU_015718_1_1_1"/>
<dbReference type="InParanoid" id="Q7JJU6"/>
<dbReference type="OMA" id="MANTTKY"/>
<dbReference type="OrthoDB" id="10312at9604"/>
<dbReference type="TreeFam" id="TF300298"/>
<dbReference type="Proteomes" id="UP000002277">
    <property type="component" value="Chromosome 6"/>
</dbReference>
<dbReference type="Bgee" id="ENSPTRG00000017675">
    <property type="expression patterns" value="Expressed in fibroblast and 21 other cell types or tissues"/>
</dbReference>
<dbReference type="GO" id="GO:0044297">
    <property type="term" value="C:cell body"/>
    <property type="evidence" value="ECO:0007669"/>
    <property type="project" value="Ensembl"/>
</dbReference>
<dbReference type="GO" id="GO:0005737">
    <property type="term" value="C:cytoplasm"/>
    <property type="evidence" value="ECO:0000318"/>
    <property type="project" value="GO_Central"/>
</dbReference>
<dbReference type="GO" id="GO:0036464">
    <property type="term" value="C:cytoplasmic ribonucleoprotein granule"/>
    <property type="evidence" value="ECO:0007669"/>
    <property type="project" value="Ensembl"/>
</dbReference>
<dbReference type="GO" id="GO:0045171">
    <property type="term" value="C:intercellular bridge"/>
    <property type="evidence" value="ECO:0007669"/>
    <property type="project" value="Ensembl"/>
</dbReference>
<dbReference type="GO" id="GO:0005874">
    <property type="term" value="C:microtubule"/>
    <property type="evidence" value="ECO:0000318"/>
    <property type="project" value="GO_Central"/>
</dbReference>
<dbReference type="GO" id="GO:0072686">
    <property type="term" value="C:mitotic spindle"/>
    <property type="evidence" value="ECO:0007669"/>
    <property type="project" value="Ensembl"/>
</dbReference>
<dbReference type="GO" id="GO:0005641">
    <property type="term" value="C:nuclear envelope lumen"/>
    <property type="evidence" value="ECO:0007669"/>
    <property type="project" value="Ensembl"/>
</dbReference>
<dbReference type="GO" id="GO:0005525">
    <property type="term" value="F:GTP binding"/>
    <property type="evidence" value="ECO:0000318"/>
    <property type="project" value="GO_Central"/>
</dbReference>
<dbReference type="GO" id="GO:0003924">
    <property type="term" value="F:GTPase activity"/>
    <property type="evidence" value="ECO:0007669"/>
    <property type="project" value="InterPro"/>
</dbReference>
<dbReference type="GO" id="GO:0046872">
    <property type="term" value="F:metal ion binding"/>
    <property type="evidence" value="ECO:0007669"/>
    <property type="project" value="UniProtKB-KW"/>
</dbReference>
<dbReference type="GO" id="GO:0042288">
    <property type="term" value="F:MHC class I protein binding"/>
    <property type="evidence" value="ECO:0007669"/>
    <property type="project" value="Ensembl"/>
</dbReference>
<dbReference type="GO" id="GO:0005200">
    <property type="term" value="F:structural constituent of cytoskeleton"/>
    <property type="evidence" value="ECO:0000318"/>
    <property type="project" value="GO_Central"/>
</dbReference>
<dbReference type="GO" id="GO:0031625">
    <property type="term" value="F:ubiquitin protein ligase binding"/>
    <property type="evidence" value="ECO:0007669"/>
    <property type="project" value="Ensembl"/>
</dbReference>
<dbReference type="GO" id="GO:0000226">
    <property type="term" value="P:microtubule cytoskeleton organization"/>
    <property type="evidence" value="ECO:0000318"/>
    <property type="project" value="GO_Central"/>
</dbReference>
<dbReference type="GO" id="GO:0000278">
    <property type="term" value="P:mitotic cell cycle"/>
    <property type="evidence" value="ECO:0000318"/>
    <property type="project" value="GO_Central"/>
</dbReference>
<dbReference type="GO" id="GO:0071895">
    <property type="term" value="P:odontoblast differentiation"/>
    <property type="evidence" value="ECO:0007669"/>
    <property type="project" value="Ensembl"/>
</dbReference>
<dbReference type="GO" id="GO:0050807">
    <property type="term" value="P:regulation of synapse organization"/>
    <property type="evidence" value="ECO:0007669"/>
    <property type="project" value="Ensembl"/>
</dbReference>
<dbReference type="GO" id="GO:0051225">
    <property type="term" value="P:spindle assembly"/>
    <property type="evidence" value="ECO:0007669"/>
    <property type="project" value="Ensembl"/>
</dbReference>
<dbReference type="CDD" id="cd02187">
    <property type="entry name" value="beta_tubulin"/>
    <property type="match status" value="1"/>
</dbReference>
<dbReference type="FunFam" id="1.10.287.600:FF:000002">
    <property type="entry name" value="Tubulin beta chain"/>
    <property type="match status" value="1"/>
</dbReference>
<dbReference type="FunFam" id="3.30.1330.20:FF:000002">
    <property type="entry name" value="Tubulin beta chain"/>
    <property type="match status" value="1"/>
</dbReference>
<dbReference type="FunFam" id="3.40.50.1440:FF:000003">
    <property type="entry name" value="Tubulin beta chain"/>
    <property type="match status" value="1"/>
</dbReference>
<dbReference type="Gene3D" id="1.10.287.600">
    <property type="entry name" value="Helix hairpin bin"/>
    <property type="match status" value="1"/>
</dbReference>
<dbReference type="Gene3D" id="3.30.1330.20">
    <property type="entry name" value="Tubulin/FtsZ, C-terminal domain"/>
    <property type="match status" value="1"/>
</dbReference>
<dbReference type="Gene3D" id="3.40.50.1440">
    <property type="entry name" value="Tubulin/FtsZ, GTPase domain"/>
    <property type="match status" value="1"/>
</dbReference>
<dbReference type="InterPro" id="IPR013838">
    <property type="entry name" value="Beta-tubulin_BS"/>
</dbReference>
<dbReference type="InterPro" id="IPR002453">
    <property type="entry name" value="Beta_tubulin"/>
</dbReference>
<dbReference type="InterPro" id="IPR008280">
    <property type="entry name" value="Tub_FtsZ_C"/>
</dbReference>
<dbReference type="InterPro" id="IPR000217">
    <property type="entry name" value="Tubulin"/>
</dbReference>
<dbReference type="InterPro" id="IPR037103">
    <property type="entry name" value="Tubulin/FtsZ-like_C"/>
</dbReference>
<dbReference type="InterPro" id="IPR018316">
    <property type="entry name" value="Tubulin/FtsZ_2-layer-sand-dom"/>
</dbReference>
<dbReference type="InterPro" id="IPR036525">
    <property type="entry name" value="Tubulin/FtsZ_GTPase_sf"/>
</dbReference>
<dbReference type="InterPro" id="IPR023123">
    <property type="entry name" value="Tubulin_C"/>
</dbReference>
<dbReference type="InterPro" id="IPR017975">
    <property type="entry name" value="Tubulin_CS"/>
</dbReference>
<dbReference type="InterPro" id="IPR003008">
    <property type="entry name" value="Tubulin_FtsZ_GTPase"/>
</dbReference>
<dbReference type="PANTHER" id="PTHR11588">
    <property type="entry name" value="TUBULIN"/>
    <property type="match status" value="1"/>
</dbReference>
<dbReference type="Pfam" id="PF00091">
    <property type="entry name" value="Tubulin"/>
    <property type="match status" value="1"/>
</dbReference>
<dbReference type="Pfam" id="PF03953">
    <property type="entry name" value="Tubulin_C"/>
    <property type="match status" value="1"/>
</dbReference>
<dbReference type="PRINTS" id="PR01163">
    <property type="entry name" value="BETATUBULIN"/>
</dbReference>
<dbReference type="PRINTS" id="PR01161">
    <property type="entry name" value="TUBULIN"/>
</dbReference>
<dbReference type="SMART" id="SM00864">
    <property type="entry name" value="Tubulin"/>
    <property type="match status" value="1"/>
</dbReference>
<dbReference type="SMART" id="SM00865">
    <property type="entry name" value="Tubulin_C"/>
    <property type="match status" value="1"/>
</dbReference>
<dbReference type="SUPFAM" id="SSF55307">
    <property type="entry name" value="Tubulin C-terminal domain-like"/>
    <property type="match status" value="1"/>
</dbReference>
<dbReference type="SUPFAM" id="SSF52490">
    <property type="entry name" value="Tubulin nucleotide-binding domain-like"/>
    <property type="match status" value="1"/>
</dbReference>
<dbReference type="PROSITE" id="PS00227">
    <property type="entry name" value="TUBULIN"/>
    <property type="match status" value="1"/>
</dbReference>
<dbReference type="PROSITE" id="PS00228">
    <property type="entry name" value="TUBULIN_B_AUTOREG"/>
    <property type="match status" value="1"/>
</dbReference>
<sequence>MREIVHIQAGQCGNQIGAKFWEVISDEHGIDPTGTYHGDSDLQLDRISVYYNEATGGKYVPRAILVDLEPGTMDSVRSGPFGQIFRPDNFVFGQSGAGNNWAKGHYTEGAELVDSVLDVVRKEAESCDCLQGFQLTHSLGGGTGSGMGTLLISKIREEYPDRIMNTFSVVPSPKVSDTVVEPYNATLSVHQLVENTDETYCIDNEALYDICFRTLKLTTPTYGDLNHLVSATMSGVTTCLRFPGQLNADLRKLAVNMVPFPRLHFFMPGFAPLTSRGSQQYRALTVPELTQQVFDAKNMMAACDPRHGRYLTVAAVFRGRMSMKEVDEQMLNVQNKNSSYFVEWIPNNVKTAVCDIPPRGLKMAVTFIGNSTAIQELFKRISEQFTAMFRRKAFLHWYTGEGMDEMEFTEAESNMNDLVSEYQQYQDATAEEEEDFGEEAEEEA</sequence>
<keyword id="KW-0007">Acetylation</keyword>
<keyword id="KW-0963">Cytoplasm</keyword>
<keyword id="KW-0206">Cytoskeleton</keyword>
<keyword id="KW-0342">GTP-binding</keyword>
<keyword id="KW-1017">Isopeptide bond</keyword>
<keyword id="KW-0460">Magnesium</keyword>
<keyword id="KW-0479">Metal-binding</keyword>
<keyword id="KW-0488">Methylation</keyword>
<keyword id="KW-0493">Microtubule</keyword>
<keyword id="KW-0547">Nucleotide-binding</keyword>
<keyword id="KW-0597">Phosphoprotein</keyword>
<keyword id="KW-1185">Reference proteome</keyword>
<keyword id="KW-0832">Ubl conjugation</keyword>
<name>TBB5_PANTR</name>
<organism>
    <name type="scientific">Pan troglodytes</name>
    <name type="common">Chimpanzee</name>
    <dbReference type="NCBI Taxonomy" id="9598"/>
    <lineage>
        <taxon>Eukaryota</taxon>
        <taxon>Metazoa</taxon>
        <taxon>Chordata</taxon>
        <taxon>Craniata</taxon>
        <taxon>Vertebrata</taxon>
        <taxon>Euteleostomi</taxon>
        <taxon>Mammalia</taxon>
        <taxon>Eutheria</taxon>
        <taxon>Euarchontoglires</taxon>
        <taxon>Primates</taxon>
        <taxon>Haplorrhini</taxon>
        <taxon>Catarrhini</taxon>
        <taxon>Hominidae</taxon>
        <taxon>Pan</taxon>
    </lineage>
</organism>
<feature type="chain" id="PRO_0000048245" description="Tubulin beta chain">
    <location>
        <begin position="1"/>
        <end position="444"/>
    </location>
</feature>
<feature type="region of interest" description="Disordered" evidence="8">
    <location>
        <begin position="423"/>
        <end position="444"/>
    </location>
</feature>
<feature type="short sequence motif" description="MREI motif" evidence="1">
    <location>
        <begin position="1"/>
        <end position="4"/>
    </location>
</feature>
<feature type="compositionally biased region" description="Acidic residues" evidence="8">
    <location>
        <begin position="429"/>
        <end position="444"/>
    </location>
</feature>
<feature type="binding site" evidence="5">
    <location>
        <position position="11"/>
    </location>
    <ligand>
        <name>GTP</name>
        <dbReference type="ChEBI" id="CHEBI:37565"/>
    </ligand>
</feature>
<feature type="binding site" evidence="2">
    <location>
        <position position="69"/>
    </location>
    <ligand>
        <name>GTP</name>
        <dbReference type="ChEBI" id="CHEBI:37565"/>
    </ligand>
</feature>
<feature type="binding site" evidence="2">
    <location>
        <position position="69"/>
    </location>
    <ligand>
        <name>Mg(2+)</name>
        <dbReference type="ChEBI" id="CHEBI:18420"/>
    </ligand>
</feature>
<feature type="binding site" evidence="5">
    <location>
        <position position="138"/>
    </location>
    <ligand>
        <name>GTP</name>
        <dbReference type="ChEBI" id="CHEBI:37565"/>
    </ligand>
</feature>
<feature type="binding site" evidence="5">
    <location>
        <position position="142"/>
    </location>
    <ligand>
        <name>GTP</name>
        <dbReference type="ChEBI" id="CHEBI:37565"/>
    </ligand>
</feature>
<feature type="binding site" evidence="5">
    <location>
        <position position="143"/>
    </location>
    <ligand>
        <name>GTP</name>
        <dbReference type="ChEBI" id="CHEBI:37565"/>
    </ligand>
</feature>
<feature type="binding site" evidence="5">
    <location>
        <position position="144"/>
    </location>
    <ligand>
        <name>GTP</name>
        <dbReference type="ChEBI" id="CHEBI:37565"/>
    </ligand>
</feature>
<feature type="binding site" evidence="5">
    <location>
        <position position="204"/>
    </location>
    <ligand>
        <name>GTP</name>
        <dbReference type="ChEBI" id="CHEBI:37565"/>
    </ligand>
</feature>
<feature type="binding site" evidence="5">
    <location>
        <position position="226"/>
    </location>
    <ligand>
        <name>GTP</name>
        <dbReference type="ChEBI" id="CHEBI:37565"/>
    </ligand>
</feature>
<feature type="modified residue" description="Phosphoserine" evidence="4">
    <location>
        <position position="40"/>
    </location>
</feature>
<feature type="modified residue" description="Phosphothreonine" evidence="1">
    <location>
        <position position="55"/>
    </location>
</feature>
<feature type="modified residue" description="N6-acetyllysine; alternate" evidence="1">
    <location>
        <position position="58"/>
    </location>
</feature>
<feature type="modified residue" description="N6-succinyllysine; alternate" evidence="4">
    <location>
        <position position="58"/>
    </location>
</feature>
<feature type="modified residue" description="Phosphoserine; by CDK1" evidence="1">
    <location>
        <position position="172"/>
    </location>
</feature>
<feature type="modified residue" description="Phosphothreonine" evidence="1">
    <location>
        <position position="285"/>
    </location>
</feature>
<feature type="modified residue" description="Phosphothreonine" evidence="1">
    <location>
        <position position="290"/>
    </location>
</feature>
<feature type="modified residue" description="Omega-N-methylarginine" evidence="1">
    <location>
        <position position="318"/>
    </location>
</feature>
<feature type="modified residue" description="5-glutamyl polyglutamate" evidence="1">
    <location>
        <position position="434"/>
    </location>
</feature>
<feature type="modified residue" description="5-glutamyl glycine" evidence="1">
    <location>
        <position position="438"/>
    </location>
</feature>
<feature type="modified residue" description="5-glutamyl polyglutamate" evidence="6">
    <location>
        <position position="438"/>
    </location>
</feature>
<feature type="modified residue" description="5-glutamyl glycine" evidence="1">
    <location>
        <position position="439"/>
    </location>
</feature>
<feature type="modified residue" description="5-glutamyl polyglutamate" evidence="1">
    <location>
        <position position="439"/>
    </location>
</feature>
<feature type="modified residue" description="5-glutamyl glycine" evidence="1">
    <location>
        <position position="441"/>
    </location>
</feature>
<feature type="modified residue" description="5-glutamyl polyglutamate" evidence="1">
    <location>
        <position position="441"/>
    </location>
</feature>
<feature type="modified residue" description="5-glutamyl glycine" evidence="1">
    <location>
        <position position="442"/>
    </location>
</feature>
<feature type="modified residue" description="5-glutamyl glycine" evidence="1">
    <location>
        <position position="443"/>
    </location>
</feature>
<feature type="cross-link" description="Glycyl lysine isopeptide (Lys-Gly) (interchain with G-Cter in ubiquitin); alternate" evidence="1">
    <location>
        <position position="58"/>
    </location>
</feature>
<feature type="cross-link" description="Glycyl lysine isopeptide (Lys-Gly) (interchain with G-Cter in ubiquitin)" evidence="1">
    <location>
        <position position="324"/>
    </location>
</feature>
<evidence type="ECO:0000250" key="1">
    <source>
        <dbReference type="UniProtKB" id="P07437"/>
    </source>
</evidence>
<evidence type="ECO:0000250" key="2">
    <source>
        <dbReference type="UniProtKB" id="P68363"/>
    </source>
</evidence>
<evidence type="ECO:0000250" key="3">
    <source>
        <dbReference type="UniProtKB" id="P69893"/>
    </source>
</evidence>
<evidence type="ECO:0000250" key="4">
    <source>
        <dbReference type="UniProtKB" id="P99024"/>
    </source>
</evidence>
<evidence type="ECO:0000250" key="5">
    <source>
        <dbReference type="UniProtKB" id="Q13509"/>
    </source>
</evidence>
<evidence type="ECO:0000250" key="6">
    <source>
        <dbReference type="UniProtKB" id="Q2T9S0"/>
    </source>
</evidence>
<evidence type="ECO:0000250" key="7">
    <source>
        <dbReference type="UniProtKB" id="Q71U36"/>
    </source>
</evidence>
<evidence type="ECO:0000256" key="8">
    <source>
        <dbReference type="SAM" id="MobiDB-lite"/>
    </source>
</evidence>
<evidence type="ECO:0000305" key="9"/>
<accession>Q7JJU6</accession>
<accession>Q1XHT6</accession>
<gene>
    <name type="primary">TUBB</name>
    <name type="synonym">TUBB5</name>
</gene>
<reference key="1">
    <citation type="journal article" date="2003" name="Proc. Natl. Acad. Sci. U.S.A.">
        <title>Comparative sequencing of human and chimpanzee MHC class I regions unveils insertions/deletions as the major path to genomic divergence.</title>
        <authorList>
            <person name="Anzai T."/>
            <person name="Shiina T."/>
            <person name="Kimura N."/>
            <person name="Yanagiya K."/>
            <person name="Kohara S."/>
            <person name="Shigenari A."/>
            <person name="Yamagata T."/>
            <person name="Kulski J.K."/>
            <person name="Naruse T.K."/>
            <person name="Fujimori Y."/>
            <person name="Fukuzumi Y."/>
            <person name="Yamazaki M."/>
            <person name="Tashiro H."/>
            <person name="Iwamoto C."/>
            <person name="Umehara Y."/>
            <person name="Imanishi T."/>
            <person name="Meyer A."/>
            <person name="Ikeo K."/>
            <person name="Gojobori T."/>
            <person name="Bahram S."/>
            <person name="Inoko H."/>
        </authorList>
    </citation>
    <scope>NUCLEOTIDE SEQUENCE [LARGE SCALE GENOMIC DNA]</scope>
</reference>
<reference key="2">
    <citation type="journal article" date="2006" name="Genetics">
        <title>Rapid evolution of major histocompatibility complex class I genes in primates generates new disease alleles in humans via hitchhiking diversity.</title>
        <authorList>
            <person name="Shiina T."/>
            <person name="Ota M."/>
            <person name="Shimizu S."/>
            <person name="Katsuyama Y."/>
            <person name="Hashimoto N."/>
            <person name="Takasu M."/>
            <person name="Anzai T."/>
            <person name="Kulski J.K."/>
            <person name="Kikkawa E."/>
            <person name="Naruse T."/>
            <person name="Kimura N."/>
            <person name="Yanagiya K."/>
            <person name="Watanabe A."/>
            <person name="Hosomichi K."/>
            <person name="Kohara S."/>
            <person name="Iwamoto C."/>
            <person name="Umehara Y."/>
            <person name="Meyer A."/>
            <person name="Wanner V."/>
            <person name="Sano K."/>
            <person name="Macquin C."/>
            <person name="Ikeo K."/>
            <person name="Tokunaga K."/>
            <person name="Gojobori T."/>
            <person name="Inoko H."/>
            <person name="Bahram S."/>
        </authorList>
    </citation>
    <scope>NUCLEOTIDE SEQUENCE [LARGE SCALE GENOMIC DNA]</scope>
</reference>
<protein>
    <recommendedName>
        <fullName>Tubulin beta chain</fullName>
    </recommendedName>
    <alternativeName>
        <fullName>Tubulin beta-5 chain</fullName>
    </alternativeName>
</protein>
<comment type="function">
    <text>Tubulin is the major constituent of microtubules, a cylinder consisting of laterally associated linear protofilaments composed of alpha- and beta-tubulin heterodimers. Microtubules grow by the addition of GTP-tubulin dimers to the microtubule end, where a stabilizing cap forms. Below the cap, tubulin dimers are in GDP-bound state, owing to GTPase activity of alpha-tubulin.</text>
</comment>
<comment type="cofactor">
    <cofactor evidence="2">
        <name>Mg(2+)</name>
        <dbReference type="ChEBI" id="CHEBI:18420"/>
    </cofactor>
</comment>
<comment type="subunit">
    <text evidence="1 3 4">Heterodimer of alpha and beta chains. A typical microtubule is a hollow water-filled tube with an outer diameter of 25 nm and an inner diameter of 15 nM. Alpha-beta heterodimers associate head-to-tail to form protofilaments running lengthwise along the microtubule wall with the beta-tubulin subunit facing the microtubule plus end conferring a structural polarity. Microtubules usually have 13 protofilaments but different protofilament numbers can be found in some organisms and specialized cells. Interacts with CIMAP3. Interacts with DIAPH1 (By similarity). Interacts with MX1 (By similarity). May interact with RNABP10 (By similarity). Interacts with CFAP157 (By similarity). Nascent tubulin polypeptide interacts (via beta-tubulin MREI motif) with TTC5/STRAP; this interaction results in tubulin mRNA-targeted degradation (By similarity).</text>
</comment>
<comment type="subcellular location">
    <subcellularLocation>
        <location evidence="1">Cytoplasm</location>
        <location evidence="1">Cytoskeleton</location>
    </subcellularLocation>
</comment>
<comment type="domain">
    <text evidence="1">The MREI motif is common among all beta-tubulin isoforms and may be critical for tubulin autoregulation.</text>
</comment>
<comment type="PTM">
    <text evidence="4">Some glutamate residues at the C-terminus are polyglycylated, resulting in polyglycine chains on the gamma-carboxyl group. Glycylation is mainly limited to tubulin incorporated into axonemes (cilia and flagella) whereas glutamylation is prevalent in neuronal cells, centrioles, axonemes, and the mitotic spindle. Both modifications can coexist on the same protein on adjacent residues, and lowering polyglycylation levels increases polyglutamylation, and reciprocally. Cilia and flagella glycylation is required for their stability and maintenance. Flagella glycylation controls sperm motility.</text>
</comment>
<comment type="PTM">
    <text evidence="4 7">Some glutamate residues at the C-terminus are polyglutamylated, resulting in polyglutamate chains on the gamma-carboxyl group (By similarity). Polyglutamylation plays a key role in microtubule severing by spastin (SPAST). SPAST preferentially recognizes and acts on microtubules decorated with short polyglutamate tails: severing activity by SPAST increases as the number of glutamates per tubulin rises from one to eight, but decreases beyond this glutamylation threshold (By similarity). Glutamylation is also involved in cilia motility (By similarity).</text>
</comment>
<comment type="PTM">
    <text evidence="1">Phosphorylated on Ser-172 by CDK1 during the cell cycle, from metaphase to telophase, but not in interphase. This phosphorylation inhibits tubulin incorporation into microtubules.</text>
</comment>
<comment type="similarity">
    <text evidence="9">Belongs to the tubulin family.</text>
</comment>